<feature type="chain" id="PRO_0000079765" description="F1845 adhesin operon regulatory protein">
    <location>
        <begin position="1"/>
        <end position="85"/>
    </location>
</feature>
<dbReference type="EMBL" id="M98766">
    <property type="protein sequence ID" value="AAA23663.1"/>
    <property type="molecule type" value="Genomic_DNA"/>
</dbReference>
<dbReference type="PIR" id="S35905">
    <property type="entry name" value="S35905"/>
</dbReference>
<dbReference type="SMR" id="Q47133"/>
<dbReference type="GO" id="GO:0006355">
    <property type="term" value="P:regulation of DNA-templated transcription"/>
    <property type="evidence" value="ECO:0007669"/>
    <property type="project" value="InterPro"/>
</dbReference>
<dbReference type="Gene3D" id="1.10.10.2690">
    <property type="match status" value="1"/>
</dbReference>
<dbReference type="InterPro" id="IPR004356">
    <property type="entry name" value="Adhesin_operon_reg_prot"/>
</dbReference>
<dbReference type="InterPro" id="IPR053721">
    <property type="entry name" value="Fimbrial_Adhesin_Reg"/>
</dbReference>
<dbReference type="Pfam" id="PF03333">
    <property type="entry name" value="PapB"/>
    <property type="match status" value="1"/>
</dbReference>
<dbReference type="PRINTS" id="PR01554">
    <property type="entry name" value="FIMREGULATRY"/>
</dbReference>
<accession>Q47133</accession>
<proteinExistence type="predicted"/>
<comment type="function">
    <text>Regulates the transcription of genes involved in the biosynthesis of F1845 fimbrial adhesin.</text>
</comment>
<keyword id="KW-0010">Activator</keyword>
<keyword id="KW-1029">Fimbrium biogenesis</keyword>
<keyword id="KW-0804">Transcription</keyword>
<keyword id="KW-0805">Transcription regulation</keyword>
<reference key="1">
    <citation type="journal article" date="1993" name="Mol. Microbiol.">
        <title>Transcriptional organization of the F1845 fimbrial adhesin determinant of Escherichia coli.</title>
        <authorList>
            <person name="Bilge S.S."/>
            <person name="Apostol J.A. Jr."/>
            <person name="Fullner K.J."/>
            <person name="Moseley S.L."/>
        </authorList>
    </citation>
    <scope>NUCLEOTIDE SEQUENCE [GENOMIC DNA]</scope>
    <source>
        <strain>O75:NM / C1845 / DAEC</strain>
    </source>
</reference>
<organism>
    <name type="scientific">Escherichia coli</name>
    <dbReference type="NCBI Taxonomy" id="562"/>
    <lineage>
        <taxon>Bacteria</taxon>
        <taxon>Pseudomonadati</taxon>
        <taxon>Pseudomonadota</taxon>
        <taxon>Gammaproteobacteria</taxon>
        <taxon>Enterobacterales</taxon>
        <taxon>Enterobacteriaceae</taxon>
        <taxon>Escherichia</taxon>
    </lineage>
</organism>
<sequence>MSGQVPEYQFWLLAEISPVHSEKVINALRDYLVMGYNRMEACGRHGVSPGYFSGALKRFQRVSQTVYRLVPFYFPEAGHEVHRGE</sequence>
<gene>
    <name type="primary">daaA</name>
</gene>
<name>DAAA_ECOLX</name>
<protein>
    <recommendedName>
        <fullName>F1845 adhesin operon regulatory protein</fullName>
    </recommendedName>
</protein>